<reference key="1">
    <citation type="journal article" date="2003" name="Mol. Microbiol.">
        <title>Genome-based analysis of virulence genes in a non-biofilm-forming Staphylococcus epidermidis strain (ATCC 12228).</title>
        <authorList>
            <person name="Zhang Y.-Q."/>
            <person name="Ren S.-X."/>
            <person name="Li H.-L."/>
            <person name="Wang Y.-X."/>
            <person name="Fu G."/>
            <person name="Yang J."/>
            <person name="Qin Z.-Q."/>
            <person name="Miao Y.-G."/>
            <person name="Wang W.-Y."/>
            <person name="Chen R.-S."/>
            <person name="Shen Y."/>
            <person name="Chen Z."/>
            <person name="Yuan Z.-H."/>
            <person name="Zhao G.-P."/>
            <person name="Qu D."/>
            <person name="Danchin A."/>
            <person name="Wen Y.-M."/>
        </authorList>
    </citation>
    <scope>NUCLEOTIDE SEQUENCE [LARGE SCALE GENOMIC DNA]</scope>
    <source>
        <strain>ATCC 12228 / FDA PCI 1200</strain>
    </source>
</reference>
<proteinExistence type="inferred from homology"/>
<comment type="function">
    <text evidence="1">The heterodimer acts as both an ATP-dependent DNA helicase and an ATP-dependent, dual-direction single-stranded exonuclease. Recognizes the chi site generating a DNA molecule suitable for the initiation of homologous recombination. The AddB subunit has 5' -&gt; 3' nuclease activity but not helicase activity.</text>
</comment>
<comment type="cofactor">
    <cofactor evidence="1">
        <name>Mg(2+)</name>
        <dbReference type="ChEBI" id="CHEBI:18420"/>
    </cofactor>
</comment>
<comment type="cofactor">
    <cofactor evidence="1">
        <name>[4Fe-4S] cluster</name>
        <dbReference type="ChEBI" id="CHEBI:49883"/>
    </cofactor>
    <text evidence="1">Binds 1 [4Fe-4S] cluster.</text>
</comment>
<comment type="subunit">
    <text evidence="1">Heterodimer of AddA and AddB.</text>
</comment>
<comment type="miscellaneous">
    <text evidence="1">Despite having conserved helicase domains, this subunit does not have helicase activity.</text>
</comment>
<comment type="similarity">
    <text evidence="1">Belongs to the helicase family. AddB/RexB type 1 subfamily.</text>
</comment>
<protein>
    <recommendedName>
        <fullName evidence="1">ATP-dependent helicase/deoxyribonuclease subunit B</fullName>
        <ecNumber evidence="1">3.1.-.-</ecNumber>
    </recommendedName>
    <alternativeName>
        <fullName evidence="1">ATP-dependent helicase/nuclease subunit AddB</fullName>
    </alternativeName>
</protein>
<organism>
    <name type="scientific">Staphylococcus epidermidis (strain ATCC 12228 / FDA PCI 1200)</name>
    <dbReference type="NCBI Taxonomy" id="176280"/>
    <lineage>
        <taxon>Bacteria</taxon>
        <taxon>Bacillati</taxon>
        <taxon>Bacillota</taxon>
        <taxon>Bacilli</taxon>
        <taxon>Bacillales</taxon>
        <taxon>Staphylococcaceae</taxon>
        <taxon>Staphylococcus</taxon>
    </lineage>
</organism>
<evidence type="ECO:0000255" key="1">
    <source>
        <dbReference type="HAMAP-Rule" id="MF_01452"/>
    </source>
</evidence>
<dbReference type="EC" id="3.1.-.-" evidence="1"/>
<dbReference type="EMBL" id="AE015929">
    <property type="protein sequence ID" value="AAO04260.1"/>
    <property type="molecule type" value="Genomic_DNA"/>
</dbReference>
<dbReference type="RefSeq" id="NP_764218.1">
    <property type="nucleotide sequence ID" value="NC_004461.1"/>
</dbReference>
<dbReference type="RefSeq" id="WP_001831905.1">
    <property type="nucleotide sequence ID" value="NZ_WBME01000043.1"/>
</dbReference>
<dbReference type="SMR" id="Q8CPU0"/>
<dbReference type="KEGG" id="sep:SE_0663"/>
<dbReference type="PATRIC" id="fig|176280.10.peg.636"/>
<dbReference type="eggNOG" id="COG3857">
    <property type="taxonomic scope" value="Bacteria"/>
</dbReference>
<dbReference type="HOGENOM" id="CLU_007838_0_0_9"/>
<dbReference type="OrthoDB" id="9758506at2"/>
<dbReference type="Proteomes" id="UP000001411">
    <property type="component" value="Chromosome"/>
</dbReference>
<dbReference type="GO" id="GO:0051539">
    <property type="term" value="F:4 iron, 4 sulfur cluster binding"/>
    <property type="evidence" value="ECO:0007669"/>
    <property type="project" value="UniProtKB-KW"/>
</dbReference>
<dbReference type="GO" id="GO:0008409">
    <property type="term" value="F:5'-3' exonuclease activity"/>
    <property type="evidence" value="ECO:0007669"/>
    <property type="project" value="UniProtKB-UniRule"/>
</dbReference>
<dbReference type="GO" id="GO:0005524">
    <property type="term" value="F:ATP binding"/>
    <property type="evidence" value="ECO:0007669"/>
    <property type="project" value="UniProtKB-UniRule"/>
</dbReference>
<dbReference type="GO" id="GO:0003690">
    <property type="term" value="F:double-stranded DNA binding"/>
    <property type="evidence" value="ECO:0007669"/>
    <property type="project" value="UniProtKB-UniRule"/>
</dbReference>
<dbReference type="GO" id="GO:0004386">
    <property type="term" value="F:helicase activity"/>
    <property type="evidence" value="ECO:0007669"/>
    <property type="project" value="UniProtKB-KW"/>
</dbReference>
<dbReference type="GO" id="GO:0046872">
    <property type="term" value="F:metal ion binding"/>
    <property type="evidence" value="ECO:0007669"/>
    <property type="project" value="UniProtKB-KW"/>
</dbReference>
<dbReference type="GO" id="GO:0000724">
    <property type="term" value="P:double-strand break repair via homologous recombination"/>
    <property type="evidence" value="ECO:0007669"/>
    <property type="project" value="UniProtKB-UniRule"/>
</dbReference>
<dbReference type="Gene3D" id="3.90.320.10">
    <property type="match status" value="1"/>
</dbReference>
<dbReference type="Gene3D" id="3.40.50.300">
    <property type="entry name" value="P-loop containing nucleotide triphosphate hydrolases"/>
    <property type="match status" value="3"/>
</dbReference>
<dbReference type="HAMAP" id="MF_01452">
    <property type="entry name" value="AddB_type1"/>
    <property type="match status" value="1"/>
</dbReference>
<dbReference type="InterPro" id="IPR049035">
    <property type="entry name" value="ADDB_N"/>
</dbReference>
<dbReference type="InterPro" id="IPR014140">
    <property type="entry name" value="DNA_helicase_suAddB"/>
</dbReference>
<dbReference type="InterPro" id="IPR014017">
    <property type="entry name" value="DNA_helicase_UvrD-like_C"/>
</dbReference>
<dbReference type="InterPro" id="IPR027417">
    <property type="entry name" value="P-loop_NTPase"/>
</dbReference>
<dbReference type="InterPro" id="IPR011604">
    <property type="entry name" value="PDDEXK-like_dom_sf"/>
</dbReference>
<dbReference type="InterPro" id="IPR038726">
    <property type="entry name" value="PDDEXK_AddAB-type"/>
</dbReference>
<dbReference type="NCBIfam" id="TIGR02773">
    <property type="entry name" value="addB_Gpos"/>
    <property type="match status" value="1"/>
</dbReference>
<dbReference type="PANTHER" id="PTHR30591">
    <property type="entry name" value="RECBCD ENZYME SUBUNIT RECC"/>
    <property type="match status" value="1"/>
</dbReference>
<dbReference type="PANTHER" id="PTHR30591:SF1">
    <property type="entry name" value="RECBCD ENZYME SUBUNIT RECC"/>
    <property type="match status" value="1"/>
</dbReference>
<dbReference type="Pfam" id="PF21445">
    <property type="entry name" value="ADDB_N"/>
    <property type="match status" value="1"/>
</dbReference>
<dbReference type="Pfam" id="PF12705">
    <property type="entry name" value="PDDEXK_1"/>
    <property type="match status" value="1"/>
</dbReference>
<dbReference type="SUPFAM" id="SSF52540">
    <property type="entry name" value="P-loop containing nucleoside triphosphate hydrolases"/>
    <property type="match status" value="2"/>
</dbReference>
<dbReference type="PROSITE" id="PS51198">
    <property type="entry name" value="UVRD_HELICASE_ATP_BIND"/>
    <property type="match status" value="1"/>
</dbReference>
<dbReference type="PROSITE" id="PS51217">
    <property type="entry name" value="UVRD_HELICASE_CTER"/>
    <property type="match status" value="1"/>
</dbReference>
<sequence length="1159" mass="134920">MEFNTYIGRAGTGKSTAMLNQIKNKMKQDPLGDPIVLIAPTQSTFQLEQAFVNDSELHGSLRTEVLHFERLSHRVFQEVGGLTEQRLSKAALEMMIFHIVQQHESDLKLYGSQAQYYGLSEKLAEQIQDFKKYNVTPEHLNQLIENHSIQTRTKHKLEDISLIYKQLESRMNGEFITTEDSLQQFIEILSQSQWIKKAEVFIDGFHNFSTLEYRIIEALVQHAKQVTVLLTTDGSHHPFSLFRKPSEVLSHLEDIANRLNINLNKTYFNTFYRYNNDDLKNLENGFDALQFTPKHHQNHVKIFESSSMREEINEVARRILKDVREADYKFRDIAILYRDESYAYLFESILPSYDIPFNIDTKKSMTHHPIMEMLRSLLEVIRSNWHINAMLRLFKTNVLTSQFKRSSYLIDLLENFVLERGIYGKRWLDEDIFSIDQFSRMGRKSHQLTEGHQALYKEVIKLKKNVINKVLYFEQAMNEAHTVKDYATSFYESLEYFELPSQLMTQRDELELAGLTEKAEEIDQVWNGLIQILDDLVTVFDDQEMTLQQFLDVFDIGLEQLEFVMIPQTLDQVSIGTMDLAKVDNKKHIYMVGMNDGILPQTVSSSSLITDEEKKYVEDNAHVELSPTSDILQMDEAFVCYIAMTRSQQSVTFSYSLMGNSGDEKEISPFLTQIKELFYDLEITNLQDLHKAQPLLMMQHSHQTKIQLFEYLRGWLDHEDIDYRWLDAYLAIRDDDQLNQGLDYLTTSLTYDNETVQLNEILSQQLYGKTINASVSRFEGYQQCPFKHYASHGLRLNERTKYELQNFDLGDIFHSVLKYISDRIYGDFKNLDTKNIQSLTKEALELILPKVQFNLLNSSAYYKYLSKKIGSIVETTLKALKYQGEYSKFVPQRFETGFRKSPKNKGELVAQPLITNQGIPINIRGQIDRIDTYTKGDHSYVNIIDYKSSESSATLDLTKVYYGLQMQMMTYMDIVLQNKERLGLTDIVKPGGLLYFHVHEPRIKFKSWADIDEDQFQKDYIKNFKMSGLLNRDQEVLDALDIRLEPKYNSDIVPIALTAKGAINQRSSKVADENIIYQLIEHNKKNFIETASHIMDGHTEVAPLKYKQVLPCQFCNYKSVCHVDGLIDSKRYRTVDESIKPLDLIQQLRNEGGERHDSN</sequence>
<gene>
    <name evidence="1" type="primary">addB</name>
    <name type="ordered locus">SE_0663</name>
</gene>
<accession>Q8CPU0</accession>
<feature type="chain" id="PRO_0000379219" description="ATP-dependent helicase/deoxyribonuclease subunit B">
    <location>
        <begin position="1"/>
        <end position="1159"/>
    </location>
</feature>
<feature type="domain" description="UvrD-like helicase ATP-binding" evidence="1">
    <location>
        <begin position="1"/>
        <end position="275"/>
    </location>
</feature>
<feature type="domain" description="UvrD-like helicase C-terminal" evidence="1">
    <location>
        <begin position="269"/>
        <end position="583"/>
    </location>
</feature>
<feature type="binding site" evidence="1">
    <location>
        <begin position="8"/>
        <end position="15"/>
    </location>
    <ligand>
        <name>ATP</name>
        <dbReference type="ChEBI" id="CHEBI:30616"/>
    </ligand>
</feature>
<feature type="binding site" evidence="1">
    <location>
        <position position="784"/>
    </location>
    <ligand>
        <name>[4Fe-4S] cluster</name>
        <dbReference type="ChEBI" id="CHEBI:49883"/>
    </ligand>
</feature>
<feature type="binding site" evidence="1">
    <location>
        <position position="1112"/>
    </location>
    <ligand>
        <name>[4Fe-4S] cluster</name>
        <dbReference type="ChEBI" id="CHEBI:49883"/>
    </ligand>
</feature>
<feature type="binding site" evidence="1">
    <location>
        <position position="1115"/>
    </location>
    <ligand>
        <name>[4Fe-4S] cluster</name>
        <dbReference type="ChEBI" id="CHEBI:49883"/>
    </ligand>
</feature>
<feature type="binding site" evidence="1">
    <location>
        <position position="1121"/>
    </location>
    <ligand>
        <name>[4Fe-4S] cluster</name>
        <dbReference type="ChEBI" id="CHEBI:49883"/>
    </ligand>
</feature>
<name>ADDB_STAES</name>
<keyword id="KW-0004">4Fe-4S</keyword>
<keyword id="KW-0067">ATP-binding</keyword>
<keyword id="KW-0227">DNA damage</keyword>
<keyword id="KW-0234">DNA repair</keyword>
<keyword id="KW-0238">DNA-binding</keyword>
<keyword id="KW-0269">Exonuclease</keyword>
<keyword id="KW-0347">Helicase</keyword>
<keyword id="KW-0378">Hydrolase</keyword>
<keyword id="KW-0408">Iron</keyword>
<keyword id="KW-0411">Iron-sulfur</keyword>
<keyword id="KW-0479">Metal-binding</keyword>
<keyword id="KW-0540">Nuclease</keyword>
<keyword id="KW-0547">Nucleotide-binding</keyword>